<comment type="function">
    <text evidence="1">Splits dipeptides with a prolyl residue in the C-terminal position.</text>
</comment>
<comment type="catalytic activity">
    <reaction evidence="1">
        <text>Xaa-L-Pro dipeptide + H2O = an L-alpha-amino acid + L-proline</text>
        <dbReference type="Rhea" id="RHEA:76407"/>
        <dbReference type="ChEBI" id="CHEBI:15377"/>
        <dbReference type="ChEBI" id="CHEBI:59869"/>
        <dbReference type="ChEBI" id="CHEBI:60039"/>
        <dbReference type="ChEBI" id="CHEBI:195196"/>
        <dbReference type="EC" id="3.4.13.9"/>
    </reaction>
</comment>
<comment type="cofactor">
    <cofactor evidence="1">
        <name>Mn(2+)</name>
        <dbReference type="ChEBI" id="CHEBI:29035"/>
    </cofactor>
    <text evidence="1">Binds 2 manganese ions per subunit.</text>
</comment>
<comment type="similarity">
    <text evidence="1">Belongs to the peptidase M24B family. Bacterial-type prolidase subfamily.</text>
</comment>
<sequence>MESLAALYKNHIVTLQERTRDVLARFKLDALLIHSGELFNVFLDDHPYPFKVNPQFKAWVPVTQVPNCWLLVDGVNKPKLWFYLPVDYWHNVEPLPTSFWTEEVEVVALPKADGIGSQLPAARGNIGYIGPVPERALQLDIAASNINPKGVIDYLHYYRAYKTDYELACMREAQKMAVSGHRAAEEAFRSGMSEFDINLAYLTATGHRDTDVPYSNIVALNEHAAVLHYTKLDHQAPSEMRSFLLDAGAEYNGYAADLTRTWSAKSDNDYAHLVKDVNDEQLALIATMKAGVSYVDYHIQFHQRIAKLLRKHQIITDMSEEAMVENDLTGPFMPHGIGHPLGLQVHDVAGFMQDDSGTHLAAPSKYPYLRCTRVLQPRMVLTIEPGIYFIESLLAPWREGPFSKHFNWQKIEALKPFGGIRIEDNVVIHENGVENMTRDLKLA</sequence>
<proteinExistence type="inferred from homology"/>
<reference key="1">
    <citation type="journal article" date="2003" name="J. Bacteriol.">
        <title>Comparative genomics of Salmonella enterica serovar Typhi strains Ty2 and CT18.</title>
        <authorList>
            <person name="Deng W."/>
            <person name="Liou S.-R."/>
            <person name="Plunkett G. III"/>
            <person name="Mayhew G.F."/>
            <person name="Rose D.J."/>
            <person name="Burland V."/>
            <person name="Kodoyianni V."/>
            <person name="Schwartz D.C."/>
            <person name="Blattner F.R."/>
        </authorList>
    </citation>
    <scope>NUCLEOTIDE SEQUENCE [LARGE SCALE GENOMIC DNA]</scope>
    <source>
        <strain>ATCC 700931 / Ty2</strain>
    </source>
</reference>
<reference key="2">
    <citation type="journal article" date="2001" name="Nature">
        <title>Complete genome sequence of a multiple drug resistant Salmonella enterica serovar Typhi CT18.</title>
        <authorList>
            <person name="Parkhill J."/>
            <person name="Dougan G."/>
            <person name="James K.D."/>
            <person name="Thomson N.R."/>
            <person name="Pickard D."/>
            <person name="Wain J."/>
            <person name="Churcher C.M."/>
            <person name="Mungall K.L."/>
            <person name="Bentley S.D."/>
            <person name="Holden M.T.G."/>
            <person name="Sebaihia M."/>
            <person name="Baker S."/>
            <person name="Basham D."/>
            <person name="Brooks K."/>
            <person name="Chillingworth T."/>
            <person name="Connerton P."/>
            <person name="Cronin A."/>
            <person name="Davis P."/>
            <person name="Davies R.M."/>
            <person name="Dowd L."/>
            <person name="White N."/>
            <person name="Farrar J."/>
            <person name="Feltwell T."/>
            <person name="Hamlin N."/>
            <person name="Haque A."/>
            <person name="Hien T.T."/>
            <person name="Holroyd S."/>
            <person name="Jagels K."/>
            <person name="Krogh A."/>
            <person name="Larsen T.S."/>
            <person name="Leather S."/>
            <person name="Moule S."/>
            <person name="O'Gaora P."/>
            <person name="Parry C."/>
            <person name="Quail M.A."/>
            <person name="Rutherford K.M."/>
            <person name="Simmonds M."/>
            <person name="Skelton J."/>
            <person name="Stevens K."/>
            <person name="Whitehead S."/>
            <person name="Barrell B.G."/>
        </authorList>
    </citation>
    <scope>NUCLEOTIDE SEQUENCE [LARGE SCALE GENOMIC DNA]</scope>
    <source>
        <strain>CT18</strain>
    </source>
</reference>
<dbReference type="EC" id="3.4.13.9" evidence="1"/>
<dbReference type="EMBL" id="AE014613">
    <property type="protein sequence ID" value="AAO70842.1"/>
    <property type="molecule type" value="Genomic_DNA"/>
</dbReference>
<dbReference type="EMBL" id="AL513382">
    <property type="protein sequence ID" value="CAD07909.1"/>
    <property type="molecule type" value="Genomic_DNA"/>
</dbReference>
<dbReference type="RefSeq" id="NP_457768.1">
    <property type="nucleotide sequence ID" value="NC_003198.1"/>
</dbReference>
<dbReference type="RefSeq" id="WP_000444529.1">
    <property type="nucleotide sequence ID" value="NZ_WSUR01000033.1"/>
</dbReference>
<dbReference type="SMR" id="Q9L6L4"/>
<dbReference type="STRING" id="220341.gene:17587428"/>
<dbReference type="MEROPS" id="M24.003"/>
<dbReference type="KEGG" id="stt:t3314"/>
<dbReference type="KEGG" id="sty:STY3576"/>
<dbReference type="PATRIC" id="fig|220341.7.peg.3643"/>
<dbReference type="eggNOG" id="COG0006">
    <property type="taxonomic scope" value="Bacteria"/>
</dbReference>
<dbReference type="HOGENOM" id="CLU_050675_0_0_6"/>
<dbReference type="OMA" id="DFWHKVA"/>
<dbReference type="OrthoDB" id="9806388at2"/>
<dbReference type="Proteomes" id="UP000000541">
    <property type="component" value="Chromosome"/>
</dbReference>
<dbReference type="Proteomes" id="UP000002670">
    <property type="component" value="Chromosome"/>
</dbReference>
<dbReference type="GO" id="GO:0005829">
    <property type="term" value="C:cytosol"/>
    <property type="evidence" value="ECO:0007669"/>
    <property type="project" value="TreeGrafter"/>
</dbReference>
<dbReference type="GO" id="GO:0004177">
    <property type="term" value="F:aminopeptidase activity"/>
    <property type="evidence" value="ECO:0007669"/>
    <property type="project" value="TreeGrafter"/>
</dbReference>
<dbReference type="GO" id="GO:0046872">
    <property type="term" value="F:metal ion binding"/>
    <property type="evidence" value="ECO:0007669"/>
    <property type="project" value="UniProtKB-KW"/>
</dbReference>
<dbReference type="GO" id="GO:0008235">
    <property type="term" value="F:metalloexopeptidase activity"/>
    <property type="evidence" value="ECO:0007669"/>
    <property type="project" value="UniProtKB-UniRule"/>
</dbReference>
<dbReference type="GO" id="GO:0016795">
    <property type="term" value="F:phosphoric triester hydrolase activity"/>
    <property type="evidence" value="ECO:0007669"/>
    <property type="project" value="InterPro"/>
</dbReference>
<dbReference type="GO" id="GO:0102009">
    <property type="term" value="F:proline dipeptidase activity"/>
    <property type="evidence" value="ECO:0007669"/>
    <property type="project" value="UniProtKB-EC"/>
</dbReference>
<dbReference type="GO" id="GO:0006508">
    <property type="term" value="P:proteolysis"/>
    <property type="evidence" value="ECO:0007669"/>
    <property type="project" value="UniProtKB-KW"/>
</dbReference>
<dbReference type="CDD" id="cd01087">
    <property type="entry name" value="Prolidase"/>
    <property type="match status" value="1"/>
</dbReference>
<dbReference type="FunFam" id="3.40.350.10:FF:000002">
    <property type="entry name" value="Xaa-Pro dipeptidase"/>
    <property type="match status" value="1"/>
</dbReference>
<dbReference type="FunFam" id="3.90.230.10:FF:000006">
    <property type="entry name" value="Xaa-Pro dipeptidase"/>
    <property type="match status" value="1"/>
</dbReference>
<dbReference type="Gene3D" id="3.90.230.10">
    <property type="entry name" value="Creatinase/methionine aminopeptidase superfamily"/>
    <property type="match status" value="1"/>
</dbReference>
<dbReference type="Gene3D" id="3.40.350.10">
    <property type="entry name" value="Creatinase/prolidase N-terminal domain"/>
    <property type="match status" value="1"/>
</dbReference>
<dbReference type="HAMAP" id="MF_01279">
    <property type="entry name" value="X_Pro_dipeptid"/>
    <property type="match status" value="1"/>
</dbReference>
<dbReference type="InterPro" id="IPR029149">
    <property type="entry name" value="Creatin/AminoP/Spt16_N"/>
</dbReference>
<dbReference type="InterPro" id="IPR036005">
    <property type="entry name" value="Creatinase/aminopeptidase-like"/>
</dbReference>
<dbReference type="InterPro" id="IPR048819">
    <property type="entry name" value="PepQ_N"/>
</dbReference>
<dbReference type="InterPro" id="IPR000994">
    <property type="entry name" value="Pept_M24"/>
</dbReference>
<dbReference type="InterPro" id="IPR001131">
    <property type="entry name" value="Peptidase_M24B_aminopep-P_CS"/>
</dbReference>
<dbReference type="InterPro" id="IPR052433">
    <property type="entry name" value="X-Pro_dipept-like"/>
</dbReference>
<dbReference type="InterPro" id="IPR022846">
    <property type="entry name" value="X_Pro_dipept"/>
</dbReference>
<dbReference type="NCBIfam" id="NF010133">
    <property type="entry name" value="PRK13607.1"/>
    <property type="match status" value="1"/>
</dbReference>
<dbReference type="PANTHER" id="PTHR43226">
    <property type="entry name" value="XAA-PRO AMINOPEPTIDASE 3"/>
    <property type="match status" value="1"/>
</dbReference>
<dbReference type="PANTHER" id="PTHR43226:SF8">
    <property type="entry name" value="XAA-PRO DIPEPTIDASE"/>
    <property type="match status" value="1"/>
</dbReference>
<dbReference type="Pfam" id="PF21216">
    <property type="entry name" value="PepQ_N"/>
    <property type="match status" value="1"/>
</dbReference>
<dbReference type="Pfam" id="PF00557">
    <property type="entry name" value="Peptidase_M24"/>
    <property type="match status" value="1"/>
</dbReference>
<dbReference type="SUPFAM" id="SSF55920">
    <property type="entry name" value="Creatinase/aminopeptidase"/>
    <property type="match status" value="1"/>
</dbReference>
<dbReference type="PROSITE" id="PS00491">
    <property type="entry name" value="PROLINE_PEPTIDASE"/>
    <property type="match status" value="1"/>
</dbReference>
<accession>Q9L6L4</accession>
<accession>Q7AM39</accession>
<name>PEPQ_SALTI</name>
<keyword id="KW-0224">Dipeptidase</keyword>
<keyword id="KW-0378">Hydrolase</keyword>
<keyword id="KW-0464">Manganese</keyword>
<keyword id="KW-0479">Metal-binding</keyword>
<keyword id="KW-0482">Metalloprotease</keyword>
<keyword id="KW-0645">Protease</keyword>
<evidence type="ECO:0000255" key="1">
    <source>
        <dbReference type="HAMAP-Rule" id="MF_01279"/>
    </source>
</evidence>
<organism>
    <name type="scientific">Salmonella typhi</name>
    <dbReference type="NCBI Taxonomy" id="90370"/>
    <lineage>
        <taxon>Bacteria</taxon>
        <taxon>Pseudomonadati</taxon>
        <taxon>Pseudomonadota</taxon>
        <taxon>Gammaproteobacteria</taxon>
        <taxon>Enterobacterales</taxon>
        <taxon>Enterobacteriaceae</taxon>
        <taxon>Salmonella</taxon>
    </lineage>
</organism>
<feature type="chain" id="PRO_0000303855" description="Xaa-Pro dipeptidase">
    <location>
        <begin position="1"/>
        <end position="443"/>
    </location>
</feature>
<feature type="binding site" evidence="1">
    <location>
        <position position="246"/>
    </location>
    <ligand>
        <name>Mn(2+)</name>
        <dbReference type="ChEBI" id="CHEBI:29035"/>
        <label>2</label>
    </ligand>
</feature>
<feature type="binding site" evidence="1">
    <location>
        <position position="257"/>
    </location>
    <ligand>
        <name>Mn(2+)</name>
        <dbReference type="ChEBI" id="CHEBI:29035"/>
        <label>1</label>
    </ligand>
</feature>
<feature type="binding site" evidence="1">
    <location>
        <position position="257"/>
    </location>
    <ligand>
        <name>Mn(2+)</name>
        <dbReference type="ChEBI" id="CHEBI:29035"/>
        <label>2</label>
    </ligand>
</feature>
<feature type="binding site" evidence="1">
    <location>
        <position position="339"/>
    </location>
    <ligand>
        <name>Mn(2+)</name>
        <dbReference type="ChEBI" id="CHEBI:29035"/>
        <label>1</label>
    </ligand>
</feature>
<feature type="binding site" evidence="1">
    <location>
        <position position="384"/>
    </location>
    <ligand>
        <name>Mn(2+)</name>
        <dbReference type="ChEBI" id="CHEBI:29035"/>
        <label>1</label>
    </ligand>
</feature>
<feature type="binding site" evidence="1">
    <location>
        <position position="423"/>
    </location>
    <ligand>
        <name>Mn(2+)</name>
        <dbReference type="ChEBI" id="CHEBI:29035"/>
        <label>1</label>
    </ligand>
</feature>
<feature type="binding site" evidence="1">
    <location>
        <position position="423"/>
    </location>
    <ligand>
        <name>Mn(2+)</name>
        <dbReference type="ChEBI" id="CHEBI:29035"/>
        <label>2</label>
    </ligand>
</feature>
<protein>
    <recommendedName>
        <fullName evidence="1">Xaa-Pro dipeptidase</fullName>
        <shortName evidence="1">X-Pro dipeptidase</shortName>
        <ecNumber evidence="1">3.4.13.9</ecNumber>
    </recommendedName>
    <alternativeName>
        <fullName evidence="1">Imidodipeptidase</fullName>
    </alternativeName>
    <alternativeName>
        <fullName evidence="1">Proline dipeptidase</fullName>
        <shortName evidence="1">Prolidase</shortName>
    </alternativeName>
</protein>
<gene>
    <name evidence="1" type="primary">pepQ</name>
    <name type="ordered locus">STY3576</name>
    <name type="ordered locus">t3314</name>
</gene>